<reference key="1">
    <citation type="submission" date="2001-08" db="EMBL/GenBank/DDBJ databases">
        <title>Cloning and characterization of a novel member of the histidine triad protein family (HINT-5) in different vertebrate species.</title>
        <authorList>
            <person name="Huang C.-H."/>
            <person name="Peng J."/>
            <person name="Chen H."/>
            <person name="Chen Y."/>
        </authorList>
    </citation>
    <scope>NUCLEOTIDE SEQUENCE [MRNA]</scope>
    <source>
        <strain>Sprague-Dawley</strain>
    </source>
</reference>
<dbReference type="EC" id="3.6.1.59" evidence="2"/>
<dbReference type="EMBL" id="AF411249">
    <property type="protein sequence ID" value="AAN03664.1"/>
    <property type="molecule type" value="mRNA"/>
</dbReference>
<dbReference type="RefSeq" id="NP_695214.1">
    <property type="nucleotide sequence ID" value="NM_153302.1"/>
</dbReference>
<dbReference type="SMR" id="Q8K4F7"/>
<dbReference type="BioGRID" id="251757">
    <property type="interactions" value="1"/>
</dbReference>
<dbReference type="FunCoup" id="Q8K4F7">
    <property type="interactions" value="2280"/>
</dbReference>
<dbReference type="STRING" id="10116.ENSRNOP00000013763"/>
<dbReference type="iPTMnet" id="Q8K4F7"/>
<dbReference type="PhosphoSitePlus" id="Q8K4F7"/>
<dbReference type="jPOST" id="Q8K4F7"/>
<dbReference type="PaxDb" id="10116-ENSRNOP00000013763"/>
<dbReference type="GeneID" id="266605"/>
<dbReference type="KEGG" id="rno:266605"/>
<dbReference type="UCSC" id="RGD:628887">
    <property type="organism name" value="rat"/>
</dbReference>
<dbReference type="AGR" id="RGD:628887"/>
<dbReference type="CTD" id="28960"/>
<dbReference type="RGD" id="628887">
    <property type="gene designation" value="Dcps"/>
</dbReference>
<dbReference type="eggNOG" id="KOG3969">
    <property type="taxonomic scope" value="Eukaryota"/>
</dbReference>
<dbReference type="InParanoid" id="Q8K4F7"/>
<dbReference type="PhylomeDB" id="Q8K4F7"/>
<dbReference type="Reactome" id="R-RNO-429958">
    <property type="pathway name" value="mRNA decay by 3' to 5' exoribonuclease"/>
</dbReference>
<dbReference type="PRO" id="PR:Q8K4F7"/>
<dbReference type="Proteomes" id="UP000002494">
    <property type="component" value="Unplaced"/>
</dbReference>
<dbReference type="GO" id="GO:0005737">
    <property type="term" value="C:cytoplasm"/>
    <property type="evidence" value="ECO:0000250"/>
    <property type="project" value="UniProtKB"/>
</dbReference>
<dbReference type="GO" id="GO:0005634">
    <property type="term" value="C:nucleus"/>
    <property type="evidence" value="ECO:0000250"/>
    <property type="project" value="UniProtKB"/>
</dbReference>
<dbReference type="GO" id="GO:0000932">
    <property type="term" value="C:P-body"/>
    <property type="evidence" value="ECO:0000318"/>
    <property type="project" value="GO_Central"/>
</dbReference>
<dbReference type="GO" id="GO:0140932">
    <property type="term" value="F:5'-(N(7)-methyl 5'-triphosphoguanosine)-[mRNA] diphosphatase activity"/>
    <property type="evidence" value="ECO:0000250"/>
    <property type="project" value="UniProtKB"/>
</dbReference>
<dbReference type="GO" id="GO:0042802">
    <property type="term" value="F:identical protein binding"/>
    <property type="evidence" value="ECO:0000266"/>
    <property type="project" value="RGD"/>
</dbReference>
<dbReference type="GO" id="GO:0000340">
    <property type="term" value="F:RNA 7-methylguanosine cap binding"/>
    <property type="evidence" value="ECO:0000250"/>
    <property type="project" value="UniProtKB"/>
</dbReference>
<dbReference type="GO" id="GO:0000290">
    <property type="term" value="P:deadenylation-dependent decapping of nuclear-transcribed mRNA"/>
    <property type="evidence" value="ECO:0000318"/>
    <property type="project" value="GO_Central"/>
</dbReference>
<dbReference type="GO" id="GO:0045292">
    <property type="term" value="P:mRNA cis splicing, via spliceosome"/>
    <property type="evidence" value="ECO:0000250"/>
    <property type="project" value="UniProtKB"/>
</dbReference>
<dbReference type="GO" id="GO:0110156">
    <property type="term" value="P:mRNA methylguanosine-cap decapping"/>
    <property type="evidence" value="ECO:0000266"/>
    <property type="project" value="RGD"/>
</dbReference>
<dbReference type="FunFam" id="3.30.200.40:FF:000001">
    <property type="entry name" value="m7GpppX diphosphatase"/>
    <property type="match status" value="1"/>
</dbReference>
<dbReference type="FunFam" id="3.30.428.10:FF:000006">
    <property type="entry name" value="m7GpppX diphosphatase"/>
    <property type="match status" value="1"/>
</dbReference>
<dbReference type="Gene3D" id="3.30.428.10">
    <property type="entry name" value="HIT-like"/>
    <property type="match status" value="1"/>
</dbReference>
<dbReference type="Gene3D" id="3.30.200.40">
    <property type="entry name" value="Scavenger mRNA decapping enzyme, N-terminal domain"/>
    <property type="match status" value="1"/>
</dbReference>
<dbReference type="InterPro" id="IPR008594">
    <property type="entry name" value="DcpS/DCS2"/>
</dbReference>
<dbReference type="InterPro" id="IPR019808">
    <property type="entry name" value="Histidine_triad_CS"/>
</dbReference>
<dbReference type="InterPro" id="IPR036265">
    <property type="entry name" value="HIT-like_sf"/>
</dbReference>
<dbReference type="InterPro" id="IPR011145">
    <property type="entry name" value="Scavenger_mRNA_decap_enz_N"/>
</dbReference>
<dbReference type="PANTHER" id="PTHR12978">
    <property type="entry name" value="HISTIDINE TRIAD HIT PROTEIN MEMBER"/>
    <property type="match status" value="1"/>
</dbReference>
<dbReference type="PANTHER" id="PTHR12978:SF0">
    <property type="entry name" value="M7GPPPX DIPHOSPHATASE"/>
    <property type="match status" value="1"/>
</dbReference>
<dbReference type="Pfam" id="PF05652">
    <property type="entry name" value="DcpS"/>
    <property type="match status" value="1"/>
</dbReference>
<dbReference type="Pfam" id="PF11969">
    <property type="entry name" value="DcpS_C"/>
    <property type="match status" value="1"/>
</dbReference>
<dbReference type="PIRSF" id="PIRSF028973">
    <property type="entry name" value="Scavenger_mRNA_decap_enz"/>
    <property type="match status" value="1"/>
</dbReference>
<dbReference type="SUPFAM" id="SSF54197">
    <property type="entry name" value="HIT-like"/>
    <property type="match status" value="1"/>
</dbReference>
<dbReference type="SUPFAM" id="SSF102860">
    <property type="entry name" value="mRNA decapping enzyme DcpS N-terminal domain"/>
    <property type="match status" value="1"/>
</dbReference>
<dbReference type="PROSITE" id="PS00892">
    <property type="entry name" value="HIT_1"/>
    <property type="match status" value="1"/>
</dbReference>
<feature type="initiator methionine" description="Removed" evidence="2">
    <location>
        <position position="1"/>
    </location>
</feature>
<feature type="chain" id="PRO_0000109797" description="m7GpppX diphosphatase">
    <location>
        <begin position="2"/>
        <end position="336"/>
    </location>
</feature>
<feature type="region of interest" description="Disordered" evidence="3">
    <location>
        <begin position="1"/>
        <end position="36"/>
    </location>
</feature>
<feature type="short sequence motif" description="nuclear localization signal (NLS)" evidence="1">
    <location>
        <begin position="9"/>
        <end position="12"/>
    </location>
</feature>
<feature type="short sequence motif" description="nuclear export sequence (NES)" evidence="1">
    <location>
        <begin position="141"/>
        <end position="153"/>
    </location>
</feature>
<feature type="short sequence motif" description="Histidine triad motif" evidence="1">
    <location>
        <begin position="274"/>
        <end position="278"/>
    </location>
</feature>
<feature type="active site" description="Nucleophile" evidence="1">
    <location>
        <position position="276"/>
    </location>
</feature>
<feature type="binding site" evidence="1">
    <location>
        <position position="174"/>
    </location>
    <ligand>
        <name>substrate</name>
    </ligand>
</feature>
<feature type="binding site" evidence="1">
    <location>
        <position position="184"/>
    </location>
    <ligand>
        <name>substrate</name>
    </ligand>
</feature>
<feature type="binding site" evidence="1">
    <location>
        <position position="204"/>
    </location>
    <ligand>
        <name>substrate</name>
    </ligand>
</feature>
<feature type="binding site" evidence="1">
    <location>
        <position position="206"/>
    </location>
    <ligand>
        <name>substrate</name>
    </ligand>
</feature>
<feature type="binding site" evidence="1">
    <location>
        <begin position="267"/>
        <end position="278"/>
    </location>
    <ligand>
        <name>substrate</name>
    </ligand>
</feature>
<feature type="modified residue" description="N-acetylalanine" evidence="2">
    <location>
        <position position="2"/>
    </location>
</feature>
<feature type="modified residue" description="Phosphoserine" evidence="2">
    <location>
        <position position="23"/>
    </location>
</feature>
<feature type="modified residue" description="N6-acetyllysine" evidence="2">
    <location>
        <position position="137"/>
    </location>
</feature>
<feature type="modified residue" description="N6-acetyllysine" evidence="2">
    <location>
        <position position="141"/>
    </location>
</feature>
<accession>Q8K4F7</accession>
<sequence length="336" mass="38714">MADTAPQLKRKREQEAEEAETPSTEEKEAGVGNGTSAPVRLPFSGFRVQKVLRESARDKIIFLHGKVNEDSGDTHGEDAVVILEKTPFQVEHVAQLLTGNPELKLQFSNDIYSTYNLFPPRHLSDIKTTVVYPASEKHLQKYMRQDLRLIRETGDDYRSLTLPYLESQSLSIQWVYNILDKKAEADRIVFENPDPSDGFVLIPDLKWNQQQLDDLYLIAICHRRGIRSLRDLTPEHLPLLRNILREGQEAILKRYQVTGDRLRVYLHYLPSYYHLHVHFTALGFEAPGSGVERAHLLAEVIENLECDPKHYQRRTLTFALRTDDPLLQLLQKAQQP</sequence>
<protein>
    <recommendedName>
        <fullName>m7GpppX diphosphatase</fullName>
        <ecNumber evidence="2">3.6.1.59</ecNumber>
    </recommendedName>
    <alternativeName>
        <fullName>DCS-1</fullName>
    </alternativeName>
    <alternativeName>
        <fullName>Decapping scavenger enzyme</fullName>
    </alternativeName>
    <alternativeName>
        <fullName>Hint-related 7meGMP-directed hydrolase</fullName>
    </alternativeName>
    <alternativeName>
        <fullName>Histidine triad nucleotide-binding protein 5</fullName>
    </alternativeName>
    <alternativeName>
        <fullName>Histidine triad protein member 5</fullName>
        <shortName>HINT-5</shortName>
    </alternativeName>
    <alternativeName>
        <fullName>Scavenger mRNA-decapping enzyme DcpS</fullName>
    </alternativeName>
</protein>
<comment type="function">
    <text evidence="1">Decapping scavenger enzyme that catalyzes the cleavage of a residual cap structure following the degradation of mRNAs by the 3'-&gt;5' exosome-mediated mRNA decay pathway. Hydrolyzes cap analog structures like 7-methylguanosine nucleoside triphosphate (m7GpppG) with up to 10 nucleotide substrates (small capped oligoribonucleotides) and specifically releases 5'-phosphorylated RNA fragments and 7-methylguanosine monophosphate (m7GMP). Cleaves cap analog structures like tri-methyl guanosine nucleoside triphosphate (m3(2,2,7)GpppG) with very poor efficiency. Does not hydrolyze unmethylated cap analog (GpppG) and shows no decapping activity on intact m7GpppG-capped mRNA molecules longer than 25 nucleotides. Does not hydrolyze 7-methylguanosine diphosphate (m7GDP) to m7GMP. May also play a role in the 5'-&gt;3 mRNA decay pathway; m7GDP, the downstream product released by the 5'-&gt;3' mRNA mediated decapping activity, may be also converted by DCPS to m7GMP. Binds to m7GpppG and strongly to m7GDP. Plays a role in first intron splicing of pre-mRNAs. Inhibits activation-induced cell death.</text>
</comment>
<comment type="catalytic activity">
    <reaction evidence="2">
        <text>a 5'-end (N(7)-methyl 5'-triphosphoguanosine)-ribonucleoside in mRNA + H2O = N(7)-methyl-GMP + a 5'-end diphospho-ribonucleoside in mRNA + 2 H(+)</text>
        <dbReference type="Rhea" id="RHEA:65388"/>
        <dbReference type="Rhea" id="RHEA-COMP:17165"/>
        <dbReference type="Rhea" id="RHEA-COMP:17167"/>
        <dbReference type="ChEBI" id="CHEBI:15377"/>
        <dbReference type="ChEBI" id="CHEBI:15378"/>
        <dbReference type="ChEBI" id="CHEBI:58285"/>
        <dbReference type="ChEBI" id="CHEBI:156461"/>
        <dbReference type="ChEBI" id="CHEBI:167616"/>
        <dbReference type="EC" id="3.6.1.59"/>
    </reaction>
</comment>
<comment type="activity regulation">
    <text evidence="1">The hydrolytic product 7-methylguanosine diphosphate (m7GDP) efficiently inhibits the decapping scavenger activity and acts as a competitive inhibitor in vitro. Inhibited by 2,4-diaminoquinazoline.</text>
</comment>
<comment type="subunit">
    <text evidence="1">Homodimer. Associates with components of the exosome multienzyme ribonuclease complex, such as EXOSC3 and EXOSC4. Interacts with NDOR1.</text>
</comment>
<comment type="subcellular location">
    <subcellularLocation>
        <location evidence="1">Cytoplasm</location>
    </subcellularLocation>
    <subcellularLocation>
        <location evidence="1">Nucleus</location>
    </subcellularLocation>
    <text evidence="1">Predominantly localized in the nucleus. Nucleocytoplasmic shuttling protein that can transiently enter the cytoplasm in mammalian cells in a XPO1/CRM1-dependent manner.</text>
</comment>
<comment type="domain">
    <text evidence="1">The C-terminal histidine triad (HIT) motif and the N-terminal domain are required for the decapping activity. The N-terminus is necessary but not sufficient for binding cap structures.</text>
</comment>
<comment type="similarity">
    <text evidence="4">Belongs to the HIT family.</text>
</comment>
<keyword id="KW-0007">Acetylation</keyword>
<keyword id="KW-0963">Cytoplasm</keyword>
<keyword id="KW-0378">Hydrolase</keyword>
<keyword id="KW-0507">mRNA processing</keyword>
<keyword id="KW-0508">mRNA splicing</keyword>
<keyword id="KW-0539">Nucleus</keyword>
<keyword id="KW-0597">Phosphoprotein</keyword>
<keyword id="KW-1185">Reference proteome</keyword>
<name>DCPS_RAT</name>
<evidence type="ECO:0000250" key="1"/>
<evidence type="ECO:0000250" key="2">
    <source>
        <dbReference type="UniProtKB" id="Q96C86"/>
    </source>
</evidence>
<evidence type="ECO:0000256" key="3">
    <source>
        <dbReference type="SAM" id="MobiDB-lite"/>
    </source>
</evidence>
<evidence type="ECO:0000305" key="4"/>
<proteinExistence type="evidence at transcript level"/>
<organism>
    <name type="scientific">Rattus norvegicus</name>
    <name type="common">Rat</name>
    <dbReference type="NCBI Taxonomy" id="10116"/>
    <lineage>
        <taxon>Eukaryota</taxon>
        <taxon>Metazoa</taxon>
        <taxon>Chordata</taxon>
        <taxon>Craniata</taxon>
        <taxon>Vertebrata</taxon>
        <taxon>Euteleostomi</taxon>
        <taxon>Mammalia</taxon>
        <taxon>Eutheria</taxon>
        <taxon>Euarchontoglires</taxon>
        <taxon>Glires</taxon>
        <taxon>Rodentia</taxon>
        <taxon>Myomorpha</taxon>
        <taxon>Muroidea</taxon>
        <taxon>Muridae</taxon>
        <taxon>Murinae</taxon>
        <taxon>Rattus</taxon>
    </lineage>
</organism>
<gene>
    <name type="primary">Dcps</name>
    <name type="synonym">Dcs1</name>
    <name type="synonym">Hint5</name>
</gene>